<reference key="1">
    <citation type="journal article" date="1994" name="Plant Physiol.">
        <title>Nucleotide sequence of a maize cDNA for a class II, acidic beta-1,3-glucanase.</title>
        <authorList>
            <person name="Wu S."/>
            <person name="Kriz A.L."/>
            <person name="Widholm J.M."/>
        </authorList>
    </citation>
    <scope>NUCLEOTIDE SEQUENCE [MRNA]</scope>
    <source>
        <strain>cv. Va26</strain>
        <tissue>Seedling</tissue>
    </source>
</reference>
<evidence type="ECO:0000250" key="1"/>
<evidence type="ECO:0000250" key="2">
    <source>
        <dbReference type="UniProtKB" id="O22317"/>
    </source>
</evidence>
<evidence type="ECO:0000305" key="3"/>
<proteinExistence type="evidence at transcript level"/>
<organism>
    <name type="scientific">Zea mays</name>
    <name type="common">Maize</name>
    <dbReference type="NCBI Taxonomy" id="4577"/>
    <lineage>
        <taxon>Eukaryota</taxon>
        <taxon>Viridiplantae</taxon>
        <taxon>Streptophyta</taxon>
        <taxon>Embryophyta</taxon>
        <taxon>Tracheophyta</taxon>
        <taxon>Spermatophyta</taxon>
        <taxon>Magnoliopsida</taxon>
        <taxon>Liliopsida</taxon>
        <taxon>Poales</taxon>
        <taxon>Poaceae</taxon>
        <taxon>PACMAD clade</taxon>
        <taxon>Panicoideae</taxon>
        <taxon>Andropogonodae</taxon>
        <taxon>Andropogoneae</taxon>
        <taxon>Tripsacinae</taxon>
        <taxon>Zea</taxon>
    </lineage>
</organism>
<dbReference type="EC" id="3.2.1.39"/>
<dbReference type="EMBL" id="M95407">
    <property type="protein sequence ID" value="AAA74320.1"/>
    <property type="molecule type" value="mRNA"/>
</dbReference>
<dbReference type="PIR" id="T02088">
    <property type="entry name" value="T02088"/>
</dbReference>
<dbReference type="SMR" id="P49237"/>
<dbReference type="FunCoup" id="P49237">
    <property type="interactions" value="34"/>
</dbReference>
<dbReference type="STRING" id="4577.P49237"/>
<dbReference type="CAZy" id="GH17">
    <property type="family name" value="Glycoside Hydrolase Family 17"/>
</dbReference>
<dbReference type="PaxDb" id="4577-GRMZM2G065585_P01"/>
<dbReference type="MaizeGDB" id="25482"/>
<dbReference type="eggNOG" id="ENOG502QQ3M">
    <property type="taxonomic scope" value="Eukaryota"/>
</dbReference>
<dbReference type="InParanoid" id="P49237"/>
<dbReference type="Proteomes" id="UP000007305">
    <property type="component" value="Unplaced"/>
</dbReference>
<dbReference type="ExpressionAtlas" id="P49237">
    <property type="expression patterns" value="baseline and differential"/>
</dbReference>
<dbReference type="GO" id="GO:0005576">
    <property type="term" value="C:extracellular region"/>
    <property type="evidence" value="ECO:0007669"/>
    <property type="project" value="UniProtKB-SubCell"/>
</dbReference>
<dbReference type="GO" id="GO:0042973">
    <property type="term" value="F:glucan endo-1,3-beta-D-glucosidase activity"/>
    <property type="evidence" value="ECO:0007669"/>
    <property type="project" value="UniProtKB-EC"/>
</dbReference>
<dbReference type="GO" id="GO:0005975">
    <property type="term" value="P:carbohydrate metabolic process"/>
    <property type="evidence" value="ECO:0007669"/>
    <property type="project" value="InterPro"/>
</dbReference>
<dbReference type="GO" id="GO:0006952">
    <property type="term" value="P:defense response"/>
    <property type="evidence" value="ECO:0007669"/>
    <property type="project" value="UniProtKB-KW"/>
</dbReference>
<dbReference type="FunFam" id="3.20.20.80:FF:000010">
    <property type="entry name" value="glucan endo-1,3-beta-glucosidase, basic"/>
    <property type="match status" value="1"/>
</dbReference>
<dbReference type="Gene3D" id="3.20.20.80">
    <property type="entry name" value="Glycosidases"/>
    <property type="match status" value="1"/>
</dbReference>
<dbReference type="InterPro" id="IPR000490">
    <property type="entry name" value="Glyco_hydro_17"/>
</dbReference>
<dbReference type="InterPro" id="IPR044965">
    <property type="entry name" value="Glyco_hydro_17_plant"/>
</dbReference>
<dbReference type="InterPro" id="IPR017853">
    <property type="entry name" value="Glycoside_hydrolase_SF"/>
</dbReference>
<dbReference type="PANTHER" id="PTHR32227">
    <property type="entry name" value="GLUCAN ENDO-1,3-BETA-GLUCOSIDASE BG1-RELATED-RELATED"/>
    <property type="match status" value="1"/>
</dbReference>
<dbReference type="Pfam" id="PF00332">
    <property type="entry name" value="Glyco_hydro_17"/>
    <property type="match status" value="1"/>
</dbReference>
<dbReference type="SUPFAM" id="SSF51445">
    <property type="entry name" value="(Trans)glycosidases"/>
    <property type="match status" value="1"/>
</dbReference>
<dbReference type="PROSITE" id="PS00587">
    <property type="entry name" value="GLYCOSYL_HYDROL_F17"/>
    <property type="match status" value="1"/>
</dbReference>
<keyword id="KW-0326">Glycosidase</keyword>
<keyword id="KW-0378">Hydrolase</keyword>
<keyword id="KW-0611">Plant defense</keyword>
<keyword id="KW-1185">Reference proteome</keyword>
<keyword id="KW-0964">Secreted</keyword>
<keyword id="KW-0732">Signal</keyword>
<comment type="function">
    <text>Is thought to be an important plant defense-related product against fungal pathogens.</text>
</comment>
<comment type="catalytic activity">
    <reaction>
        <text>Hydrolysis of (1-&gt;3)-beta-D-glucosidic linkages in (1-&gt;3)-beta-D-glucans.</text>
        <dbReference type="EC" id="3.2.1.39"/>
    </reaction>
</comment>
<comment type="subcellular location">
    <subcellularLocation>
        <location evidence="3">Secreted</location>
        <location evidence="3">Extracellular space</location>
    </subcellularLocation>
</comment>
<comment type="tissue specificity">
    <text>Accumulates in aleurone layers. Much lower levels are found in the embryo, and none in starchy endosperm.</text>
</comment>
<comment type="induction">
    <text>By pathogen infection.</text>
</comment>
<comment type="similarity">
    <text evidence="3">Belongs to the glycosyl hydrolase 17 family.</text>
</comment>
<protein>
    <recommendedName>
        <fullName>Glucan endo-1,3-beta-glucosidase, acidic isoform</fullName>
        <ecNumber>3.2.1.39</ecNumber>
    </recommendedName>
    <alternativeName>
        <fullName>(1-&gt;3)-beta-glucan endohydrolase</fullName>
        <shortName>(1-&gt;3)-beta-glucanase</shortName>
    </alternativeName>
    <alternativeName>
        <fullName>Beta-1,3-endoglucanase</fullName>
    </alternativeName>
</protein>
<name>E13B_MAIZE</name>
<feature type="signal peptide" evidence="1">
    <location>
        <begin position="1"/>
        <end position="29"/>
    </location>
</feature>
<feature type="chain" id="PRO_0000011854" description="Glucan endo-1,3-beta-glucosidase, acidic isoform">
    <location>
        <begin position="30"/>
        <end position="335"/>
    </location>
</feature>
<feature type="active site" description="Proton donor" evidence="2">
    <location>
        <position position="122"/>
    </location>
</feature>
<feature type="active site" description="Nucleophile" evidence="2">
    <location>
        <position position="259"/>
    </location>
</feature>
<accession>P49237</accession>
<sequence length="335" mass="34894">MARQGVIASMHALALLLGAFAAIPTGVQSIGVCYGVNGDNLPPASDVVQLYQSNGINLLRIYFPDANPLNALSGTSIGLIMDVPNTDLASLASDPSAAAAWVQSNVQASRRSACRYIAVGNEVSGGDTGSILPAMQNLNAALANAGLGGSIKVSTAVQSDVTQGFPPSQGTFSQGYMAPSRQYLQSTGAPLLSNVYPYFSYVGNPAQIDLKYALFTSPGTVVQDGSNAYQNLFDALVDTFVSALEENAGAGNVPVVVSESGWPSAGGDAATAANAQTYNQNLINHVGQGTPKRPGPIETYIFAMFNEDQKTGAESERHFGLFNPDKSPVYPINFS</sequence>